<dbReference type="EC" id="3.4.22.-" evidence="3"/>
<dbReference type="EMBL" id="BX284603">
    <property type="protein sequence ID" value="CCD63432.1"/>
    <property type="molecule type" value="Genomic_DNA"/>
</dbReference>
<dbReference type="EMBL" id="BX284603">
    <property type="protein sequence ID" value="CCD63433.1"/>
    <property type="molecule type" value="Genomic_DNA"/>
</dbReference>
<dbReference type="EMBL" id="BX284603">
    <property type="protein sequence ID" value="CCD63434.1"/>
    <property type="molecule type" value="Genomic_DNA"/>
</dbReference>
<dbReference type="EMBL" id="BX284603">
    <property type="protein sequence ID" value="CCD63435.1"/>
    <property type="molecule type" value="Genomic_DNA"/>
</dbReference>
<dbReference type="PIR" id="S44749">
    <property type="entry name" value="S44749"/>
</dbReference>
<dbReference type="PIR" id="S44750">
    <property type="entry name" value="S44750"/>
</dbReference>
<dbReference type="RefSeq" id="NP_001367450.1">
    <molecule id="P34308-3"/>
    <property type="nucleotide sequence ID" value="NM_001379817.1"/>
</dbReference>
<dbReference type="RefSeq" id="NP_001367451.1">
    <molecule id="P34308-4"/>
    <property type="nucleotide sequence ID" value="NM_001379816.3"/>
</dbReference>
<dbReference type="RefSeq" id="NP_498740.2">
    <molecule id="P34308-2"/>
    <property type="nucleotide sequence ID" value="NM_066339.7"/>
</dbReference>
<dbReference type="RefSeq" id="NP_498741.3">
    <molecule id="P34308-1"/>
    <property type="nucleotide sequence ID" value="NM_066340.4"/>
</dbReference>
<dbReference type="RefSeq" id="NP_741237.1">
    <property type="nucleotide sequence ID" value="NM_171886.4"/>
</dbReference>
<dbReference type="RefSeq" id="NP_741238.1">
    <property type="nucleotide sequence ID" value="NM_171201.1"/>
</dbReference>
<dbReference type="SMR" id="P34308"/>
<dbReference type="BioGRID" id="41328">
    <property type="interactions" value="16"/>
</dbReference>
<dbReference type="FunCoup" id="P34308">
    <property type="interactions" value="437"/>
</dbReference>
<dbReference type="STRING" id="6239.C06G4.2a.2"/>
<dbReference type="MEROPS" id="C02.A03"/>
<dbReference type="PaxDb" id="6239-C06G4.2a"/>
<dbReference type="PeptideAtlas" id="P34308"/>
<dbReference type="EnsemblMetazoa" id="C06G4.2a.1">
    <molecule id="P34308-1"/>
    <property type="protein sequence ID" value="C06G4.2a.1"/>
    <property type="gene ID" value="WBGene00000542"/>
</dbReference>
<dbReference type="EnsemblMetazoa" id="C06G4.2a.2">
    <molecule id="P34308-1"/>
    <property type="protein sequence ID" value="C06G4.2a.2"/>
    <property type="gene ID" value="WBGene00000542"/>
</dbReference>
<dbReference type="EnsemblMetazoa" id="C06G4.2b.1">
    <molecule id="P34308-2"/>
    <property type="protein sequence ID" value="C06G4.2b.1"/>
    <property type="gene ID" value="WBGene00000542"/>
</dbReference>
<dbReference type="EnsemblMetazoa" id="C06G4.2b.2">
    <molecule id="P34308-2"/>
    <property type="protein sequence ID" value="C06G4.2b.2"/>
    <property type="gene ID" value="WBGene00000542"/>
</dbReference>
<dbReference type="EnsemblMetazoa" id="C06G4.2c.1">
    <molecule id="P34308-3"/>
    <property type="protein sequence ID" value="C06G4.2c.1"/>
    <property type="gene ID" value="WBGene00000542"/>
</dbReference>
<dbReference type="EnsemblMetazoa" id="C06G4.2d.1">
    <molecule id="P34308-4"/>
    <property type="protein sequence ID" value="C06G4.2d.1"/>
    <property type="gene ID" value="WBGene00000542"/>
</dbReference>
<dbReference type="GeneID" id="176122"/>
<dbReference type="KEGG" id="cel:CELE_C06G4.2"/>
<dbReference type="UCSC" id="C06G4.2a.1">
    <molecule id="P34308-1"/>
    <property type="organism name" value="c. elegans"/>
</dbReference>
<dbReference type="AGR" id="WB:WBGene00000542"/>
<dbReference type="CTD" id="176122"/>
<dbReference type="WormBase" id="C06G4.2a">
    <molecule id="P34308-1"/>
    <property type="protein sequence ID" value="CE37743"/>
    <property type="gene ID" value="WBGene00000542"/>
    <property type="gene designation" value="clp-1"/>
</dbReference>
<dbReference type="WormBase" id="C06G4.2b">
    <molecule id="P34308-2"/>
    <property type="protein sequence ID" value="CE37744"/>
    <property type="gene ID" value="WBGene00000542"/>
    <property type="gene designation" value="clp-1"/>
</dbReference>
<dbReference type="WormBase" id="C06G4.2c">
    <molecule id="P34308-3"/>
    <property type="protein sequence ID" value="CE00517"/>
    <property type="gene ID" value="WBGene00000542"/>
    <property type="gene designation" value="clp-1"/>
</dbReference>
<dbReference type="WormBase" id="C06G4.2d">
    <molecule id="P34308-4"/>
    <property type="protein sequence ID" value="CE30486"/>
    <property type="gene ID" value="WBGene00000542"/>
    <property type="gene designation" value="clp-1"/>
</dbReference>
<dbReference type="eggNOG" id="KOG0045">
    <property type="taxonomic scope" value="Eukaryota"/>
</dbReference>
<dbReference type="GeneTree" id="ENSGT00970000196060"/>
<dbReference type="InParanoid" id="P34308"/>
<dbReference type="OMA" id="DNSREWR"/>
<dbReference type="OrthoDB" id="424753at2759"/>
<dbReference type="PhylomeDB" id="P34308"/>
<dbReference type="Reactome" id="R-CEL-6798695">
    <property type="pathway name" value="Neutrophil degranulation"/>
</dbReference>
<dbReference type="PRO" id="PR:P34308"/>
<dbReference type="Proteomes" id="UP000001940">
    <property type="component" value="Chromosome III"/>
</dbReference>
<dbReference type="Bgee" id="WBGene00000542">
    <property type="expression patterns" value="Expressed in larva and 4 other cell types or tissues"/>
</dbReference>
<dbReference type="GO" id="GO:0005737">
    <property type="term" value="C:cytoplasm"/>
    <property type="evidence" value="ECO:0000318"/>
    <property type="project" value="GO_Central"/>
</dbReference>
<dbReference type="GO" id="GO:0031430">
    <property type="term" value="C:M band"/>
    <property type="evidence" value="ECO:0000314"/>
    <property type="project" value="WormBase"/>
</dbReference>
<dbReference type="GO" id="GO:0030017">
    <property type="term" value="C:sarcomere"/>
    <property type="evidence" value="ECO:0000314"/>
    <property type="project" value="WormBase"/>
</dbReference>
<dbReference type="GO" id="GO:0004198">
    <property type="term" value="F:calcium-dependent cysteine-type endopeptidase activity"/>
    <property type="evidence" value="ECO:0000318"/>
    <property type="project" value="GO_Central"/>
</dbReference>
<dbReference type="GO" id="GO:0071277">
    <property type="term" value="P:cellular response to calcium ion"/>
    <property type="evidence" value="ECO:0000315"/>
    <property type="project" value="UniProtKB"/>
</dbReference>
<dbReference type="GO" id="GO:0007005">
    <property type="term" value="P:mitochondrion organization"/>
    <property type="evidence" value="ECO:0000315"/>
    <property type="project" value="UniProtKB"/>
</dbReference>
<dbReference type="GO" id="GO:0046716">
    <property type="term" value="P:muscle cell cellular homeostasis"/>
    <property type="evidence" value="ECO:0000315"/>
    <property type="project" value="UniProtKB"/>
</dbReference>
<dbReference type="GO" id="GO:0070266">
    <property type="term" value="P:necroptotic process"/>
    <property type="evidence" value="ECO:0000316"/>
    <property type="project" value="WormBase"/>
</dbReference>
<dbReference type="GO" id="GO:0060298">
    <property type="term" value="P:positive regulation of sarcomere organization"/>
    <property type="evidence" value="ECO:0000315"/>
    <property type="project" value="UniProtKB"/>
</dbReference>
<dbReference type="GO" id="GO:0006508">
    <property type="term" value="P:proteolysis"/>
    <property type="evidence" value="ECO:0000318"/>
    <property type="project" value="GO_Central"/>
</dbReference>
<dbReference type="CDD" id="cd00214">
    <property type="entry name" value="Calpain_III"/>
    <property type="match status" value="1"/>
</dbReference>
<dbReference type="CDD" id="cd00044">
    <property type="entry name" value="CysPc"/>
    <property type="match status" value="1"/>
</dbReference>
<dbReference type="FunFam" id="3.90.70.10:FF:000001">
    <property type="entry name" value="Calpain-1 catalytic subunit"/>
    <property type="match status" value="1"/>
</dbReference>
<dbReference type="FunFam" id="2.60.120.380:FF:000002">
    <property type="entry name" value="calpain-3 isoform X1"/>
    <property type="match status" value="1"/>
</dbReference>
<dbReference type="Gene3D" id="2.60.120.380">
    <property type="match status" value="1"/>
</dbReference>
<dbReference type="Gene3D" id="3.90.70.10">
    <property type="entry name" value="Cysteine proteinases"/>
    <property type="match status" value="1"/>
</dbReference>
<dbReference type="InterPro" id="IPR033883">
    <property type="entry name" value="C2_III"/>
</dbReference>
<dbReference type="InterPro" id="IPR022684">
    <property type="entry name" value="Calpain_cysteine_protease"/>
</dbReference>
<dbReference type="InterPro" id="IPR022682">
    <property type="entry name" value="Calpain_domain_III"/>
</dbReference>
<dbReference type="InterPro" id="IPR022683">
    <property type="entry name" value="Calpain_III"/>
</dbReference>
<dbReference type="InterPro" id="IPR036213">
    <property type="entry name" value="Calpain_III_sf"/>
</dbReference>
<dbReference type="InterPro" id="IPR038765">
    <property type="entry name" value="Papain-like_cys_pep_sf"/>
</dbReference>
<dbReference type="InterPro" id="IPR000169">
    <property type="entry name" value="Pept_cys_AS"/>
</dbReference>
<dbReference type="InterPro" id="IPR001300">
    <property type="entry name" value="Peptidase_C2_calpain_cat"/>
</dbReference>
<dbReference type="PANTHER" id="PTHR10183">
    <property type="entry name" value="CALPAIN"/>
    <property type="match status" value="1"/>
</dbReference>
<dbReference type="PANTHER" id="PTHR10183:SF419">
    <property type="entry name" value="CALPAIN CLP-1"/>
    <property type="match status" value="1"/>
</dbReference>
<dbReference type="Pfam" id="PF01067">
    <property type="entry name" value="Calpain_III"/>
    <property type="match status" value="1"/>
</dbReference>
<dbReference type="Pfam" id="PF00648">
    <property type="entry name" value="Peptidase_C2"/>
    <property type="match status" value="1"/>
</dbReference>
<dbReference type="PRINTS" id="PR00704">
    <property type="entry name" value="CALPAIN"/>
</dbReference>
<dbReference type="SMART" id="SM00720">
    <property type="entry name" value="calpain_III"/>
    <property type="match status" value="1"/>
</dbReference>
<dbReference type="SMART" id="SM00230">
    <property type="entry name" value="CysPc"/>
    <property type="match status" value="1"/>
</dbReference>
<dbReference type="SUPFAM" id="SSF49758">
    <property type="entry name" value="Calpain large subunit, middle domain (domain III)"/>
    <property type="match status" value="1"/>
</dbReference>
<dbReference type="SUPFAM" id="SSF54001">
    <property type="entry name" value="Cysteine proteinases"/>
    <property type="match status" value="1"/>
</dbReference>
<dbReference type="PROSITE" id="PS50203">
    <property type="entry name" value="CALPAIN_CAT"/>
    <property type="match status" value="1"/>
</dbReference>
<dbReference type="PROSITE" id="PS00139">
    <property type="entry name" value="THIOL_PROTEASE_CYS"/>
    <property type="match status" value="1"/>
</dbReference>
<comment type="function">
    <text evidence="1 5 6 7">Calcium-regulated non-lysosomal thiol-protease which catalyzes limited proteolysis of substrates (By similarity). Required for assembly and maintenance of integrin attachment complexes which are essential for maintenance of adult muscle (PubMed:22253611). Proteolytic activity is activated in response to increased intracellular Ca(2+) levels during cell degeneration and promotes necrotic cell death (PubMed:12410314, PubMed:22479198).</text>
</comment>
<comment type="subcellular location">
    <subcellularLocation>
        <location evidence="7">Cytoplasm</location>
        <location evidence="7">Myofibril</location>
        <location evidence="7">Sarcomere</location>
        <location evidence="7">M line</location>
    </subcellularLocation>
    <subcellularLocation>
        <location evidence="7">Cytoplasm</location>
        <location evidence="7">Myofibril</location>
        <location evidence="7">Sarcomere</location>
    </subcellularLocation>
    <text evidence="7">In body wall muscle cells, localizes at M-lines extending over the H-zone, and at adhesion plaques which form between adjacent cells.</text>
</comment>
<comment type="alternative products">
    <event type="alternative splicing"/>
    <isoform>
        <id>P34308-1</id>
        <name evidence="9">a</name>
        <sequence type="displayed"/>
    </isoform>
    <isoform>
        <id>P34308-2</id>
        <name evidence="10">b</name>
        <sequence type="described" ref="VSP_005247 VSP_005252"/>
    </isoform>
    <isoform>
        <id>P34308-3</id>
        <name evidence="11">c</name>
        <sequence type="described" ref="VSP_005249 VSP_005251"/>
    </isoform>
    <isoform>
        <id>P34308-4</id>
        <name evidence="12">d</name>
        <sequence type="described" ref="VSP_005248 VSP_005250"/>
    </isoform>
    <text>Experimental confirmation may be lacking for some isoforms.</text>
</comment>
<comment type="tissue specificity">
    <text evidence="5 7">Expressed in muscle and neuronal tissues (PubMed:12410314, PubMed:22479198). Expressed in the ventral and dorsal nerve cord, intestinal and hypodermal tissues (PubMed:22479198).</text>
</comment>
<comment type="disruption phenotype">
    <text evidence="5 6">RNAi-mediated knockdown results in adult muscle defects which include irregularities in sarcomeric structures, disorganized integrin attachment complexes, and increased mitochondrial fragmentation (PubMed:22253611). RNAi-mediated knockdown in integrin attachment complex component mutants unc-112 (e669su250) and unc-52 (r367) blocks the protein degradation which normally results from complex disruption (PubMed:22253611). RNAi-mediated knockdown suppresses cell death in the neurodegenerative models deg-3 (u662), gsa-1 (Q227L) and mec-4 (u231) (PubMed:12410314).</text>
</comment>
<comment type="similarity">
    <text evidence="8">Belongs to the peptidase C2 family.</text>
</comment>
<protein>
    <recommendedName>
        <fullName>Calpain clp-1</fullName>
        <ecNumber evidence="3">3.4.22.-</ecNumber>
    </recommendedName>
</protein>
<keyword id="KW-0025">Alternative splicing</keyword>
<keyword id="KW-0963">Cytoplasm</keyword>
<keyword id="KW-0378">Hydrolase</keyword>
<keyword id="KW-0645">Protease</keyword>
<keyword id="KW-1185">Reference proteome</keyword>
<keyword id="KW-0788">Thiol protease</keyword>
<proteinExistence type="evidence at transcript level"/>
<reference key="1">
    <citation type="journal article" date="1994" name="Nature">
        <title>2.2 Mb of contiguous nucleotide sequence from chromosome III of C. elegans.</title>
        <authorList>
            <person name="Wilson R."/>
            <person name="Ainscough R."/>
            <person name="Anderson K."/>
            <person name="Baynes C."/>
            <person name="Berks M."/>
            <person name="Bonfield J."/>
            <person name="Burton J."/>
            <person name="Connell M."/>
            <person name="Copsey T."/>
            <person name="Cooper J."/>
            <person name="Coulson A."/>
            <person name="Craxton M."/>
            <person name="Dear S."/>
            <person name="Du Z."/>
            <person name="Durbin R."/>
            <person name="Favello A."/>
            <person name="Fraser A."/>
            <person name="Fulton L."/>
            <person name="Gardner A."/>
            <person name="Green P."/>
            <person name="Hawkins T."/>
            <person name="Hillier L."/>
            <person name="Jier M."/>
            <person name="Johnston L."/>
            <person name="Jones M."/>
            <person name="Kershaw J."/>
            <person name="Kirsten J."/>
            <person name="Laisster N."/>
            <person name="Latreille P."/>
            <person name="Lightning J."/>
            <person name="Lloyd C."/>
            <person name="Mortimore B."/>
            <person name="O'Callaghan M."/>
            <person name="Parsons J."/>
            <person name="Percy C."/>
            <person name="Rifken L."/>
            <person name="Roopra A."/>
            <person name="Saunders D."/>
            <person name="Shownkeen R."/>
            <person name="Sims M."/>
            <person name="Smaldon N."/>
            <person name="Smith A."/>
            <person name="Smith M."/>
            <person name="Sonnhammer E."/>
            <person name="Staden R."/>
            <person name="Sulston J."/>
            <person name="Thierry-Mieg J."/>
            <person name="Thomas K."/>
            <person name="Vaudin M."/>
            <person name="Vaughan K."/>
            <person name="Waterston R."/>
            <person name="Watson A."/>
            <person name="Weinstock L."/>
            <person name="Wilkinson-Sproat J."/>
            <person name="Wohldman P."/>
        </authorList>
    </citation>
    <scope>NUCLEOTIDE SEQUENCE [LARGE SCALE GENOMIC DNA]</scope>
    <source>
        <strain>Bristol N2</strain>
    </source>
</reference>
<reference key="2">
    <citation type="journal article" date="1998" name="Science">
        <title>Genome sequence of the nematode C. elegans: a platform for investigating biology.</title>
        <authorList>
            <consortium name="The C. elegans sequencing consortium"/>
        </authorList>
    </citation>
    <scope>NUCLEOTIDE SEQUENCE [LARGE SCALE GENOMIC DNA]</scope>
    <source>
        <strain>Bristol N2</strain>
    </source>
</reference>
<reference key="3">
    <citation type="journal article" date="2002" name="Nature">
        <title>Specific aspartyl and calpain proteases are required for neurodegeneration in C. elegans.</title>
        <authorList>
            <person name="Syntichaki P."/>
            <person name="Xu K."/>
            <person name="Driscoll M."/>
            <person name="Tavernarakis N."/>
        </authorList>
    </citation>
    <scope>FUNCTION</scope>
    <scope>TISSUE SPECIFICITY</scope>
    <scope>DISRUPTION PHENOTYPE</scope>
</reference>
<reference key="4">
    <citation type="journal article" date="2012" name="PLoS Genet.">
        <title>Calpains mediate integrin attachment complex maintenance of adult muscle in Caenorhabditis elegans.</title>
        <authorList>
            <person name="Etheridge T."/>
            <person name="Oczypok E.A."/>
            <person name="Lehmann S."/>
            <person name="Fields B.D."/>
            <person name="Shephard F."/>
            <person name="Jacobson L.A."/>
            <person name="Szewczyk N.J."/>
        </authorList>
    </citation>
    <scope>FUNCTION</scope>
    <scope>DISRUPTION PHENOTYPE</scope>
</reference>
<reference key="5">
    <citation type="journal article" date="2012" name="PLoS Genet.">
        <title>The atypical calpains: evolutionary analyses and roles in Caenorhabditis elegans cellular degeneration.</title>
        <authorList>
            <person name="Joyce P.I."/>
            <person name="Satija R."/>
            <person name="Chen M."/>
            <person name="Kuwabara P.E."/>
        </authorList>
    </citation>
    <scope>FUNCTION</scope>
    <scope>SUBCELLULAR LOCATION</scope>
    <scope>TISSUE SPECIFICITY</scope>
</reference>
<organism>
    <name type="scientific">Caenorhabditis elegans</name>
    <dbReference type="NCBI Taxonomy" id="6239"/>
    <lineage>
        <taxon>Eukaryota</taxon>
        <taxon>Metazoa</taxon>
        <taxon>Ecdysozoa</taxon>
        <taxon>Nematoda</taxon>
        <taxon>Chromadorea</taxon>
        <taxon>Rhabditida</taxon>
        <taxon>Rhabditina</taxon>
        <taxon>Rhabditomorpha</taxon>
        <taxon>Rhabditoidea</taxon>
        <taxon>Rhabditidae</taxon>
        <taxon>Peloderinae</taxon>
        <taxon>Caenorhabditis</taxon>
    </lineage>
</organism>
<gene>
    <name evidence="9" type="primary">clp-1</name>
    <name evidence="9" type="ORF">C06G4.2</name>
</gene>
<feature type="chain" id="PRO_0000207734" description="Calpain clp-1">
    <location>
        <begin position="1"/>
        <end position="780"/>
    </location>
</feature>
<feature type="domain" description="Calpain catalytic" evidence="3">
    <location>
        <begin position="316"/>
        <end position="611"/>
    </location>
</feature>
<feature type="region of interest" description="Disordered" evidence="4">
    <location>
        <begin position="269"/>
        <end position="300"/>
    </location>
</feature>
<feature type="compositionally biased region" description="Basic and acidic residues" evidence="4">
    <location>
        <begin position="269"/>
        <end position="282"/>
    </location>
</feature>
<feature type="active site" evidence="2">
    <location>
        <position position="371"/>
    </location>
</feature>
<feature type="active site" evidence="2">
    <location>
        <position position="527"/>
    </location>
</feature>
<feature type="active site" evidence="2">
    <location>
        <position position="551"/>
    </location>
</feature>
<feature type="splice variant" id="VSP_005247" description="In isoform b." evidence="8">
    <location>
        <begin position="76"/>
        <end position="121"/>
    </location>
</feature>
<feature type="splice variant" id="VSP_005249" description="In isoform c." evidence="8">
    <original>SNYDQGGNGNSGDQQKRKRDMAKDLIGGIFDNVVNRK</original>
    <variation>IFIFKIVRQKFPKNSSSFFCVRKHLDSLKTSPCGLDQ</variation>
    <location>
        <begin position="77"/>
        <end position="113"/>
    </location>
</feature>
<feature type="splice variant" id="VSP_005248" description="In isoform d." evidence="8">
    <original>SNYDQGGNGNSGDQQKRKRDMAKD</original>
    <variation>GGGSGGGGGGNNIGSLVGSLIGGG</variation>
    <location>
        <begin position="77"/>
        <end position="100"/>
    </location>
</feature>
<feature type="splice variant" id="VSP_005250" description="In isoform d." evidence="8">
    <location>
        <begin position="101"/>
        <end position="121"/>
    </location>
</feature>
<feature type="splice variant" id="VSP_005251" description="In isoform c." evidence="8">
    <location>
        <begin position="114"/>
        <end position="780"/>
    </location>
</feature>
<feature type="splice variant" id="VSP_005252" description="In isoform b." evidence="8">
    <original>D</original>
    <variation>DMNN</variation>
    <location>
        <position position="708"/>
    </location>
</feature>
<name>CAN1_CAEEL</name>
<evidence type="ECO:0000250" key="1">
    <source>
        <dbReference type="UniProtKB" id="P07384"/>
    </source>
</evidence>
<evidence type="ECO:0000250" key="2">
    <source>
        <dbReference type="UniProtKB" id="Q07009"/>
    </source>
</evidence>
<evidence type="ECO:0000255" key="3">
    <source>
        <dbReference type="PROSITE-ProRule" id="PRU00239"/>
    </source>
</evidence>
<evidence type="ECO:0000256" key="4">
    <source>
        <dbReference type="SAM" id="MobiDB-lite"/>
    </source>
</evidence>
<evidence type="ECO:0000269" key="5">
    <source>
    </source>
</evidence>
<evidence type="ECO:0000269" key="6">
    <source>
    </source>
</evidence>
<evidence type="ECO:0000269" key="7">
    <source>
    </source>
</evidence>
<evidence type="ECO:0000305" key="8"/>
<evidence type="ECO:0000312" key="9">
    <source>
        <dbReference type="WormBase" id="C06G4.2a"/>
    </source>
</evidence>
<evidence type="ECO:0000312" key="10">
    <source>
        <dbReference type="WormBase" id="C06G4.2b"/>
    </source>
</evidence>
<evidence type="ECO:0000312" key="11">
    <source>
        <dbReference type="WormBase" id="C06G4.2c"/>
    </source>
</evidence>
<evidence type="ECO:0000312" key="12">
    <source>
        <dbReference type="WormBase" id="C06G4.2d"/>
    </source>
</evidence>
<sequence>MADDEEEIIQKVEVKPDEFNGLIGSIAGNLIRDKVGGAGGDILGGLASNFFGGGGGGGGGGGGGGFGGGNGGFGGGSNYDQGGNGNSGDQQKRKRDMAKDLIGGIFDNVVNRKGKKEQDNYGGGGNYGGGGGNQGGGGGGGFNFNDIGGLINSMGGGGGGGQRQGGGGGGFGDILGGIGSLIGGGGGGQYNGGGGNVNPNNLNGGMVNVIGNLIGEAAHRFLGVDPGTGRIIGAVAGNVIMGLGGKDNSLGNIGKVILDNIISGKFRRDVDPFVRPGPDPDRGGGGSGPSPISPRPTTEPQDFYELRDQCLESKRLFEDPQFLANDSSLFFSKRPPKRVEWLRPGEITREPQLITEGHSRFDVIQGELGDCWLLAAAANLTLKDELFYRVVPPDQSFTENYAGIFHFQFWQYGKWVDVVIDDRLPTSNGELLYMHSASNNEFWSALLEKAYAKLFGSYEALKGGTTSEALEDMTGGLTEFIDLKNPPRNLMQMMMRGFEMGSLFGCSIEADPNVWEAKMSNGLVKGHAYSITGCRIVDGPNGQTCILRIRNPWGNEQEWNGPWSDNSREWRSVPDSVKQDMGLKFDHDGEFWMSFDDFMRNFEKMEICNLGPDVMDEVYQMTGVKAAGMVWAANTHDGAWVRNQTAGGCRNYINTFANNPQFRVQLTDSDPDDDDELCTVIFAVLQKYRRNLKQDGLDNVPIGFAVYDAGNNRGRLSKQFFAANKSAMRSAAFINLREMTGRFRVPPGNYVVVPSTFEPNEEAEFMLRVYTNGFIESEEL</sequence>
<accession>P34308</accession>
<accession>P34309</accession>
<accession>Q5DX51</accession>
<accession>Q5DX52</accession>